<dbReference type="EMBL" id="CP000010">
    <property type="protein sequence ID" value="AAU47847.1"/>
    <property type="molecule type" value="Genomic_DNA"/>
</dbReference>
<dbReference type="RefSeq" id="WP_004197938.1">
    <property type="nucleotide sequence ID" value="NC_006348.1"/>
</dbReference>
<dbReference type="RefSeq" id="YP_104143.1">
    <property type="nucleotide sequence ID" value="NC_006348.1"/>
</dbReference>
<dbReference type="SMR" id="Q62GM8"/>
<dbReference type="GeneID" id="93061809"/>
<dbReference type="KEGG" id="bma:BMA2609"/>
<dbReference type="PATRIC" id="fig|243160.12.peg.2680"/>
<dbReference type="eggNOG" id="COG0099">
    <property type="taxonomic scope" value="Bacteria"/>
</dbReference>
<dbReference type="HOGENOM" id="CLU_103849_1_2_4"/>
<dbReference type="Proteomes" id="UP000006693">
    <property type="component" value="Chromosome 1"/>
</dbReference>
<dbReference type="GO" id="GO:0005829">
    <property type="term" value="C:cytosol"/>
    <property type="evidence" value="ECO:0007669"/>
    <property type="project" value="TreeGrafter"/>
</dbReference>
<dbReference type="GO" id="GO:0015935">
    <property type="term" value="C:small ribosomal subunit"/>
    <property type="evidence" value="ECO:0007669"/>
    <property type="project" value="TreeGrafter"/>
</dbReference>
<dbReference type="GO" id="GO:0019843">
    <property type="term" value="F:rRNA binding"/>
    <property type="evidence" value="ECO:0007669"/>
    <property type="project" value="UniProtKB-UniRule"/>
</dbReference>
<dbReference type="GO" id="GO:0003735">
    <property type="term" value="F:structural constituent of ribosome"/>
    <property type="evidence" value="ECO:0007669"/>
    <property type="project" value="InterPro"/>
</dbReference>
<dbReference type="GO" id="GO:0000049">
    <property type="term" value="F:tRNA binding"/>
    <property type="evidence" value="ECO:0007669"/>
    <property type="project" value="UniProtKB-UniRule"/>
</dbReference>
<dbReference type="GO" id="GO:0006412">
    <property type="term" value="P:translation"/>
    <property type="evidence" value="ECO:0007669"/>
    <property type="project" value="UniProtKB-UniRule"/>
</dbReference>
<dbReference type="FunFam" id="1.10.8.50:FF:000001">
    <property type="entry name" value="30S ribosomal protein S13"/>
    <property type="match status" value="1"/>
</dbReference>
<dbReference type="FunFam" id="4.10.910.10:FF:000001">
    <property type="entry name" value="30S ribosomal protein S13"/>
    <property type="match status" value="1"/>
</dbReference>
<dbReference type="Gene3D" id="1.10.8.50">
    <property type="match status" value="1"/>
</dbReference>
<dbReference type="Gene3D" id="4.10.910.10">
    <property type="entry name" value="30s ribosomal protein s13, domain 2"/>
    <property type="match status" value="1"/>
</dbReference>
<dbReference type="HAMAP" id="MF_01315">
    <property type="entry name" value="Ribosomal_uS13"/>
    <property type="match status" value="1"/>
</dbReference>
<dbReference type="InterPro" id="IPR027437">
    <property type="entry name" value="Rbsml_uS13_C"/>
</dbReference>
<dbReference type="InterPro" id="IPR001892">
    <property type="entry name" value="Ribosomal_uS13"/>
</dbReference>
<dbReference type="InterPro" id="IPR010979">
    <property type="entry name" value="Ribosomal_uS13-like_H2TH"/>
</dbReference>
<dbReference type="InterPro" id="IPR019980">
    <property type="entry name" value="Ribosomal_uS13_bac-type"/>
</dbReference>
<dbReference type="InterPro" id="IPR018269">
    <property type="entry name" value="Ribosomal_uS13_CS"/>
</dbReference>
<dbReference type="NCBIfam" id="TIGR03631">
    <property type="entry name" value="uS13_bact"/>
    <property type="match status" value="1"/>
</dbReference>
<dbReference type="PANTHER" id="PTHR10871">
    <property type="entry name" value="30S RIBOSOMAL PROTEIN S13/40S RIBOSOMAL PROTEIN S18"/>
    <property type="match status" value="1"/>
</dbReference>
<dbReference type="PANTHER" id="PTHR10871:SF1">
    <property type="entry name" value="SMALL RIBOSOMAL SUBUNIT PROTEIN US13M"/>
    <property type="match status" value="1"/>
</dbReference>
<dbReference type="Pfam" id="PF00416">
    <property type="entry name" value="Ribosomal_S13"/>
    <property type="match status" value="1"/>
</dbReference>
<dbReference type="PIRSF" id="PIRSF002134">
    <property type="entry name" value="Ribosomal_S13"/>
    <property type="match status" value="1"/>
</dbReference>
<dbReference type="SUPFAM" id="SSF46946">
    <property type="entry name" value="S13-like H2TH domain"/>
    <property type="match status" value="1"/>
</dbReference>
<dbReference type="PROSITE" id="PS00646">
    <property type="entry name" value="RIBOSOMAL_S13_1"/>
    <property type="match status" value="1"/>
</dbReference>
<dbReference type="PROSITE" id="PS50159">
    <property type="entry name" value="RIBOSOMAL_S13_2"/>
    <property type="match status" value="1"/>
</dbReference>
<reference key="1">
    <citation type="journal article" date="2004" name="Proc. Natl. Acad. Sci. U.S.A.">
        <title>Structural flexibility in the Burkholderia mallei genome.</title>
        <authorList>
            <person name="Nierman W.C."/>
            <person name="DeShazer D."/>
            <person name="Kim H.S."/>
            <person name="Tettelin H."/>
            <person name="Nelson K.E."/>
            <person name="Feldblyum T.V."/>
            <person name="Ulrich R.L."/>
            <person name="Ronning C.M."/>
            <person name="Brinkac L.M."/>
            <person name="Daugherty S.C."/>
            <person name="Davidsen T.D."/>
            <person name="DeBoy R.T."/>
            <person name="Dimitrov G."/>
            <person name="Dodson R.J."/>
            <person name="Durkin A.S."/>
            <person name="Gwinn M.L."/>
            <person name="Haft D.H."/>
            <person name="Khouri H.M."/>
            <person name="Kolonay J.F."/>
            <person name="Madupu R."/>
            <person name="Mohammoud Y."/>
            <person name="Nelson W.C."/>
            <person name="Radune D."/>
            <person name="Romero C.M."/>
            <person name="Sarria S."/>
            <person name="Selengut J."/>
            <person name="Shamblin C."/>
            <person name="Sullivan S.A."/>
            <person name="White O."/>
            <person name="Yu Y."/>
            <person name="Zafar N."/>
            <person name="Zhou L."/>
            <person name="Fraser C.M."/>
        </authorList>
    </citation>
    <scope>NUCLEOTIDE SEQUENCE [LARGE SCALE GENOMIC DNA]</scope>
    <source>
        <strain>ATCC 23344</strain>
    </source>
</reference>
<organism>
    <name type="scientific">Burkholderia mallei (strain ATCC 23344)</name>
    <dbReference type="NCBI Taxonomy" id="243160"/>
    <lineage>
        <taxon>Bacteria</taxon>
        <taxon>Pseudomonadati</taxon>
        <taxon>Pseudomonadota</taxon>
        <taxon>Betaproteobacteria</taxon>
        <taxon>Burkholderiales</taxon>
        <taxon>Burkholderiaceae</taxon>
        <taxon>Burkholderia</taxon>
        <taxon>pseudomallei group</taxon>
    </lineage>
</organism>
<accession>Q62GM8</accession>
<protein>
    <recommendedName>
        <fullName evidence="1">Small ribosomal subunit protein uS13</fullName>
    </recommendedName>
    <alternativeName>
        <fullName evidence="3">30S ribosomal protein S13</fullName>
    </alternativeName>
</protein>
<comment type="function">
    <text evidence="1">Located at the top of the head of the 30S subunit, it contacts several helices of the 16S rRNA. In the 70S ribosome it contacts the 23S rRNA (bridge B1a) and protein L5 of the 50S subunit (bridge B1b), connecting the 2 subunits; these bridges are implicated in subunit movement. Contacts the tRNAs in the A and P-sites.</text>
</comment>
<comment type="subunit">
    <text evidence="1">Part of the 30S ribosomal subunit. Forms a loose heterodimer with protein S19. Forms two bridges to the 50S subunit in the 70S ribosome.</text>
</comment>
<comment type="similarity">
    <text evidence="1">Belongs to the universal ribosomal protein uS13 family.</text>
</comment>
<evidence type="ECO:0000255" key="1">
    <source>
        <dbReference type="HAMAP-Rule" id="MF_01315"/>
    </source>
</evidence>
<evidence type="ECO:0000256" key="2">
    <source>
        <dbReference type="SAM" id="MobiDB-lite"/>
    </source>
</evidence>
<evidence type="ECO:0000305" key="3"/>
<name>RS13_BURMA</name>
<sequence>MARIAGVNIPNHQHTEIGLTAIFGIGRTRARSICVASGVAFSKKVKDLTDADLEKLREEVGKFVVEGDLRREVTMNIKRLMDLGCYRGVRHRKGLPLRGQRTRTNARTRKGPRRAAQALKK</sequence>
<feature type="chain" id="PRO_0000230484" description="Small ribosomal subunit protein uS13">
    <location>
        <begin position="1"/>
        <end position="121"/>
    </location>
</feature>
<feature type="region of interest" description="Disordered" evidence="2">
    <location>
        <begin position="94"/>
        <end position="121"/>
    </location>
</feature>
<proteinExistence type="inferred from homology"/>
<keyword id="KW-1185">Reference proteome</keyword>
<keyword id="KW-0687">Ribonucleoprotein</keyword>
<keyword id="KW-0689">Ribosomal protein</keyword>
<keyword id="KW-0694">RNA-binding</keyword>
<keyword id="KW-0699">rRNA-binding</keyword>
<keyword id="KW-0820">tRNA-binding</keyword>
<gene>
    <name evidence="1" type="primary">rpsM</name>
    <name type="ordered locus">BMA2609</name>
</gene>